<keyword id="KW-0687">Ribonucleoprotein</keyword>
<keyword id="KW-0689">Ribosomal protein</keyword>
<protein>
    <recommendedName>
        <fullName evidence="1">Small ribosomal subunit protein bS21</fullName>
    </recommendedName>
    <alternativeName>
        <fullName evidence="2">30S ribosomal protein S21</fullName>
    </alternativeName>
</protein>
<dbReference type="EMBL" id="CP000768">
    <property type="protein sequence ID" value="ABS43763.1"/>
    <property type="molecule type" value="Genomic_DNA"/>
</dbReference>
<dbReference type="SMR" id="A7H506"/>
<dbReference type="KEGG" id="cjd:JJD26997_1587"/>
<dbReference type="HOGENOM" id="CLU_159258_1_1_7"/>
<dbReference type="Proteomes" id="UP000002302">
    <property type="component" value="Chromosome"/>
</dbReference>
<dbReference type="GO" id="GO:1990904">
    <property type="term" value="C:ribonucleoprotein complex"/>
    <property type="evidence" value="ECO:0007669"/>
    <property type="project" value="UniProtKB-KW"/>
</dbReference>
<dbReference type="GO" id="GO:0005840">
    <property type="term" value="C:ribosome"/>
    <property type="evidence" value="ECO:0007669"/>
    <property type="project" value="UniProtKB-KW"/>
</dbReference>
<dbReference type="GO" id="GO:0003735">
    <property type="term" value="F:structural constituent of ribosome"/>
    <property type="evidence" value="ECO:0007669"/>
    <property type="project" value="InterPro"/>
</dbReference>
<dbReference type="GO" id="GO:0006412">
    <property type="term" value="P:translation"/>
    <property type="evidence" value="ECO:0007669"/>
    <property type="project" value="UniProtKB-UniRule"/>
</dbReference>
<dbReference type="Gene3D" id="1.20.5.1150">
    <property type="entry name" value="Ribosomal protein S8"/>
    <property type="match status" value="1"/>
</dbReference>
<dbReference type="HAMAP" id="MF_00358">
    <property type="entry name" value="Ribosomal_bS21"/>
    <property type="match status" value="1"/>
</dbReference>
<dbReference type="InterPro" id="IPR001911">
    <property type="entry name" value="Ribosomal_bS21"/>
</dbReference>
<dbReference type="InterPro" id="IPR038380">
    <property type="entry name" value="Ribosomal_bS21_sf"/>
</dbReference>
<dbReference type="NCBIfam" id="TIGR00030">
    <property type="entry name" value="S21p"/>
    <property type="match status" value="1"/>
</dbReference>
<dbReference type="Pfam" id="PF01165">
    <property type="entry name" value="Ribosomal_S21"/>
    <property type="match status" value="1"/>
</dbReference>
<dbReference type="PRINTS" id="PR00976">
    <property type="entry name" value="RIBOSOMALS21"/>
</dbReference>
<evidence type="ECO:0000255" key="1">
    <source>
        <dbReference type="HAMAP-Rule" id="MF_00358"/>
    </source>
</evidence>
<evidence type="ECO:0000305" key="2"/>
<organism>
    <name type="scientific">Campylobacter jejuni subsp. doylei (strain ATCC BAA-1458 / RM4099 / 269.97)</name>
    <dbReference type="NCBI Taxonomy" id="360109"/>
    <lineage>
        <taxon>Bacteria</taxon>
        <taxon>Pseudomonadati</taxon>
        <taxon>Campylobacterota</taxon>
        <taxon>Epsilonproteobacteria</taxon>
        <taxon>Campylobacterales</taxon>
        <taxon>Campylobacteraceae</taxon>
        <taxon>Campylobacter</taxon>
    </lineage>
</organism>
<sequence length="70" mass="8673">MPGIKVHPNESFDEAYRKFKKQVDRNLVVTEVRARRFFEPMTEIRKKQKISARKKMLKRLYMLRRYESRL</sequence>
<name>RS21_CAMJD</name>
<reference key="1">
    <citation type="submission" date="2007-07" db="EMBL/GenBank/DDBJ databases">
        <title>Complete genome sequence of Campylobacter jejuni subsp doylei 269.97 isolated from human blood.</title>
        <authorList>
            <person name="Fouts D.E."/>
            <person name="Mongodin E.F."/>
            <person name="Puiu D."/>
            <person name="Sebastian Y."/>
            <person name="Miller W.G."/>
            <person name="Mandrell R.E."/>
            <person name="Lastovica A.J."/>
            <person name="Nelson K.E."/>
        </authorList>
    </citation>
    <scope>NUCLEOTIDE SEQUENCE [LARGE SCALE GENOMIC DNA]</scope>
    <source>
        <strain>ATCC BAA-1458 / RM4099 / 269.97</strain>
    </source>
</reference>
<proteinExistence type="inferred from homology"/>
<accession>A7H506</accession>
<gene>
    <name evidence="1" type="primary">rpsU</name>
    <name type="ordered locus">JJD26997_1587</name>
</gene>
<feature type="chain" id="PRO_1000005105" description="Small ribosomal subunit protein bS21">
    <location>
        <begin position="1"/>
        <end position="70"/>
    </location>
</feature>
<comment type="similarity">
    <text evidence="1">Belongs to the bacterial ribosomal protein bS21 family.</text>
</comment>